<sequence length="314" mass="35216">MGAGEKTAAGMPRIGMGTAVQGPKPDPIRRAVLRAIEIGYRHFDTAAHYETEAPIGEAAAEAVRSGAVASRDELFITSKLWCSDAHRDRVVPALRQSLRNLQMEYVDLYLVHWPVSMKPGRFKAPFTAEDFVPFDMRAVWEAMEECHRLGLAKAIGVANFSCKKLETLLSFATIPPTVNQVEVNPVWQQRKLREFCRGKGIQLCAYSPLGAKGTHWGSDAVMDAGVLQEIAASRGKSVAQVCLRWVYEQGDCLIVKSFDEARMRENLEVDGWELTEEERLRIAEIPQRKINLGKRYVSEHGPYKSLEELWDGEI</sequence>
<comment type="function">
    <text evidence="3">Catalyzes the reduction of a 3''-keto intermediate during the biosynthesis of 2'-deoxymugineic acid (DMA) from L-Met. Involved in the formation of phytosiderophores (MAs) belonging to the mugineic acid family and required to acquire iron.</text>
</comment>
<comment type="catalytic activity">
    <reaction evidence="3">
        <text>2'-deoxymugineate + NAD(+) = 3''-deamino-3''-oxonicotianamine + NADH + H(+)</text>
        <dbReference type="Rhea" id="RHEA:16141"/>
        <dbReference type="ChEBI" id="CHEBI:15378"/>
        <dbReference type="ChEBI" id="CHEBI:57540"/>
        <dbReference type="ChEBI" id="CHEBI:57945"/>
        <dbReference type="ChEBI" id="CHEBI:58487"/>
        <dbReference type="ChEBI" id="CHEBI:58685"/>
        <dbReference type="EC" id="1.1.1.285"/>
    </reaction>
</comment>
<comment type="catalytic activity">
    <reaction evidence="3">
        <text>2'-deoxymugineate + NADP(+) = 3''-deamino-3''-oxonicotianamine + NADPH + H(+)</text>
        <dbReference type="Rhea" id="RHEA:16137"/>
        <dbReference type="ChEBI" id="CHEBI:15378"/>
        <dbReference type="ChEBI" id="CHEBI:57783"/>
        <dbReference type="ChEBI" id="CHEBI:58349"/>
        <dbReference type="ChEBI" id="CHEBI:58487"/>
        <dbReference type="ChEBI" id="CHEBI:58685"/>
        <dbReference type="EC" id="1.1.1.285"/>
    </reaction>
</comment>
<comment type="pathway">
    <text evidence="3">Siderophore biosynthesis.</text>
</comment>
<comment type="tissue specificity">
    <text evidence="5">Mostly expressed in root tissues, observed, at low levels, in mesocotyl and embryonic roots, seedling roots, crown and seedling leafes, mature bracts, anthers, pistil, caryopsis and embryos.</text>
</comment>
<comment type="similarity">
    <text evidence="7">Belongs to the aldo/keto reductase family.</text>
</comment>
<gene>
    <name evidence="6" type="primary">DMAS1-D</name>
</gene>
<evidence type="ECO:0000250" key="1">
    <source>
        <dbReference type="UniProtKB" id="O43488"/>
    </source>
</evidence>
<evidence type="ECO:0000250" key="2">
    <source>
        <dbReference type="UniProtKB" id="Q8CG76"/>
    </source>
</evidence>
<evidence type="ECO:0000250" key="3">
    <source>
        <dbReference type="UniProtKB" id="W5DYE3"/>
    </source>
</evidence>
<evidence type="ECO:0000256" key="4">
    <source>
        <dbReference type="SAM" id="MobiDB-lite"/>
    </source>
</evidence>
<evidence type="ECO:0000269" key="5">
    <source>
    </source>
</evidence>
<evidence type="ECO:0000303" key="6">
    <source>
    </source>
</evidence>
<evidence type="ECO:0000305" key="7"/>
<dbReference type="EC" id="1.1.1.285" evidence="3"/>
<dbReference type="EMBL" id="KX348553">
    <property type="protein sequence ID" value="ARQ30107.1"/>
    <property type="molecule type" value="Genomic_DNA"/>
</dbReference>
<dbReference type="SMR" id="A0A1X9QHJ0"/>
<dbReference type="STRING" id="4565.A0A1X9QHJ0"/>
<dbReference type="PaxDb" id="4565-Traes_4DL_01BE8F7DE.2"/>
<dbReference type="EnsemblPlants" id="TraesARI4D03G02558550.1">
    <property type="protein sequence ID" value="TraesARI4D03G02558550.1"/>
    <property type="gene ID" value="TraesARI4D03G02558550"/>
</dbReference>
<dbReference type="EnsemblPlants" id="TraesJAG4D03G02516690.1">
    <property type="protein sequence ID" value="TraesJAG4D03G02516690.1"/>
    <property type="gene ID" value="TraesJAG4D03G02516690"/>
</dbReference>
<dbReference type="EnsemblPlants" id="TraesJAG4D03G02516690.2">
    <property type="protein sequence ID" value="TraesJAG4D03G02516690.2"/>
    <property type="gene ID" value="TraesJAG4D03G02516690"/>
</dbReference>
<dbReference type="EnsemblPlants" id="TraesJUL4D03G02538420.1">
    <property type="protein sequence ID" value="TraesJUL4D03G02538420.1"/>
    <property type="gene ID" value="TraesJUL4D03G02538420"/>
</dbReference>
<dbReference type="EnsemblPlants" id="TraesJUL4D03G02538420.2">
    <property type="protein sequence ID" value="TraesJUL4D03G02538420.2"/>
    <property type="gene ID" value="TraesJUL4D03G02538420"/>
</dbReference>
<dbReference type="EnsemblPlants" id="TraesKAR4D01G0281280.1">
    <property type="protein sequence ID" value="cds.TraesKAR4D01G0281280.1"/>
    <property type="gene ID" value="TraesKAR4D01G0281280"/>
</dbReference>
<dbReference type="EnsemblPlants" id="TraesLAC4D03G02472720.1">
    <property type="protein sequence ID" value="TraesLAC4D03G02472720.1"/>
    <property type="gene ID" value="TraesLAC4D03G02472720"/>
</dbReference>
<dbReference type="EnsemblPlants" id="TraesLAC4D03G02472720.2">
    <property type="protein sequence ID" value="TraesLAC4D03G02472720.2"/>
    <property type="gene ID" value="TraesLAC4D03G02472720"/>
</dbReference>
<dbReference type="EnsemblPlants" id="TraesLDM4D03G02521740.1">
    <property type="protein sequence ID" value="TraesLDM4D03G02521740.1"/>
    <property type="gene ID" value="TraesLDM4D03G02521740"/>
</dbReference>
<dbReference type="EnsemblPlants" id="TraesMAC4D03G02517230.1">
    <property type="protein sequence ID" value="TraesMAC4D03G02517230.1"/>
    <property type="gene ID" value="TraesMAC4D03G02517230"/>
</dbReference>
<dbReference type="EnsemblPlants" id="TraesMAC4D03G02517230.2">
    <property type="protein sequence ID" value="TraesMAC4D03G02517230.2"/>
    <property type="gene ID" value="TraesMAC4D03G02517230"/>
</dbReference>
<dbReference type="EnsemblPlants" id="TraesNOR4D03G02536600.1">
    <property type="protein sequence ID" value="TraesNOR4D03G02536600.1"/>
    <property type="gene ID" value="TraesNOR4D03G02536600"/>
</dbReference>
<dbReference type="EnsemblPlants" id="TraesPARA_EIv1.0_1468310.1">
    <property type="protein sequence ID" value="TraesPARA_EIv1.0_1468310.1.CDS"/>
    <property type="gene ID" value="TraesPARA_EIv1.0_1468310"/>
</dbReference>
<dbReference type="EnsemblPlants" id="TraesPARA_EIv1.0_1468310.2">
    <property type="protein sequence ID" value="TraesPARA_EIv1.0_1468310.2.CDS"/>
    <property type="gene ID" value="TraesPARA_EIv1.0_1468310"/>
</dbReference>
<dbReference type="EnsemblPlants" id="TraesSYM4D03G02547430.1">
    <property type="protein sequence ID" value="TraesSYM4D03G02547430.1"/>
    <property type="gene ID" value="TraesSYM4D03G02547430"/>
</dbReference>
<dbReference type="EnsemblPlants" id="TraesSYM4D03G02547430.2">
    <property type="protein sequence ID" value="TraesSYM4D03G02547430.2"/>
    <property type="gene ID" value="TraesSYM4D03G02547430"/>
</dbReference>
<dbReference type="Gramene" id="TraesARI4D03G02558550.1">
    <property type="protein sequence ID" value="TraesARI4D03G02558550.1"/>
    <property type="gene ID" value="TraesARI4D03G02558550"/>
</dbReference>
<dbReference type="Gramene" id="TraesJAG4D03G02516690.1">
    <property type="protein sequence ID" value="TraesJAG4D03G02516690.1"/>
    <property type="gene ID" value="TraesJAG4D03G02516690"/>
</dbReference>
<dbReference type="Gramene" id="TraesJAG4D03G02516690.2">
    <property type="protein sequence ID" value="TraesJAG4D03G02516690.2"/>
    <property type="gene ID" value="TraesJAG4D03G02516690"/>
</dbReference>
<dbReference type="Gramene" id="TraesJUL4D03G02538420.1">
    <property type="protein sequence ID" value="TraesJUL4D03G02538420.1"/>
    <property type="gene ID" value="TraesJUL4D03G02538420"/>
</dbReference>
<dbReference type="Gramene" id="TraesJUL4D03G02538420.2">
    <property type="protein sequence ID" value="TraesJUL4D03G02538420.2"/>
    <property type="gene ID" value="TraesJUL4D03G02538420"/>
</dbReference>
<dbReference type="Gramene" id="TraesKAR4D01G0281280.1">
    <property type="protein sequence ID" value="cds.TraesKAR4D01G0281280.1"/>
    <property type="gene ID" value="TraesKAR4D01G0281280"/>
</dbReference>
<dbReference type="Gramene" id="TraesLAC4D03G02472720.1">
    <property type="protein sequence ID" value="TraesLAC4D03G02472720.1"/>
    <property type="gene ID" value="TraesLAC4D03G02472720"/>
</dbReference>
<dbReference type="Gramene" id="TraesLAC4D03G02472720.2">
    <property type="protein sequence ID" value="TraesLAC4D03G02472720.2"/>
    <property type="gene ID" value="TraesLAC4D03G02472720"/>
</dbReference>
<dbReference type="Gramene" id="TraesLDM4D03G02521740.1">
    <property type="protein sequence ID" value="TraesLDM4D03G02521740.1"/>
    <property type="gene ID" value="TraesLDM4D03G02521740"/>
</dbReference>
<dbReference type="Gramene" id="TraesMAC4D03G02517230.1">
    <property type="protein sequence ID" value="TraesMAC4D03G02517230.1"/>
    <property type="gene ID" value="TraesMAC4D03G02517230"/>
</dbReference>
<dbReference type="Gramene" id="TraesMAC4D03G02517230.2">
    <property type="protein sequence ID" value="TraesMAC4D03G02517230.2"/>
    <property type="gene ID" value="TraesMAC4D03G02517230"/>
</dbReference>
<dbReference type="Gramene" id="TraesNOR4D03G02536600.1">
    <property type="protein sequence ID" value="TraesNOR4D03G02536600.1"/>
    <property type="gene ID" value="TraesNOR4D03G02536600"/>
</dbReference>
<dbReference type="Gramene" id="TraesPARA_EIv1.0_1468310.1">
    <property type="protein sequence ID" value="TraesPARA_EIv1.0_1468310.1.CDS"/>
    <property type="gene ID" value="TraesPARA_EIv1.0_1468310"/>
</dbReference>
<dbReference type="Gramene" id="TraesPARA_EIv1.0_1468310.2">
    <property type="protein sequence ID" value="TraesPARA_EIv1.0_1468310.2.CDS"/>
    <property type="gene ID" value="TraesPARA_EIv1.0_1468310"/>
</dbReference>
<dbReference type="Gramene" id="TraesSYM4D03G02547430.1">
    <property type="protein sequence ID" value="TraesSYM4D03G02547430.1"/>
    <property type="gene ID" value="TraesSYM4D03G02547430"/>
</dbReference>
<dbReference type="Gramene" id="TraesSYM4D03G02547430.2">
    <property type="protein sequence ID" value="TraesSYM4D03G02547430.2"/>
    <property type="gene ID" value="TraesSYM4D03G02547430"/>
</dbReference>
<dbReference type="eggNOG" id="KOG1277">
    <property type="taxonomic scope" value="Eukaryota"/>
</dbReference>
<dbReference type="eggNOG" id="KOG1577">
    <property type="taxonomic scope" value="Eukaryota"/>
</dbReference>
<dbReference type="Proteomes" id="UP000019116">
    <property type="component" value="Unplaced"/>
</dbReference>
<dbReference type="ExpressionAtlas" id="A0A1X9QHJ0">
    <property type="expression patterns" value="baseline and differential"/>
</dbReference>
<dbReference type="GO" id="GO:0005829">
    <property type="term" value="C:cytosol"/>
    <property type="evidence" value="ECO:0000318"/>
    <property type="project" value="GO_Central"/>
</dbReference>
<dbReference type="GO" id="GO:0033707">
    <property type="term" value="F:3''-deamino-3''-oxonicotianamine reductase activity"/>
    <property type="evidence" value="ECO:0000250"/>
    <property type="project" value="UniProtKB"/>
</dbReference>
<dbReference type="GO" id="GO:0004032">
    <property type="term" value="F:aldose reductase (NADPH) activity"/>
    <property type="evidence" value="ECO:0000318"/>
    <property type="project" value="GO_Central"/>
</dbReference>
<dbReference type="GO" id="GO:1990641">
    <property type="term" value="P:response to iron ion starvation"/>
    <property type="evidence" value="ECO:0000250"/>
    <property type="project" value="UniProtKB"/>
</dbReference>
<dbReference type="GO" id="GO:0019290">
    <property type="term" value="P:siderophore biosynthetic process"/>
    <property type="evidence" value="ECO:0000250"/>
    <property type="project" value="UniProtKB"/>
</dbReference>
<dbReference type="CDD" id="cd19124">
    <property type="entry name" value="AKR_AKR4A_4B"/>
    <property type="match status" value="1"/>
</dbReference>
<dbReference type="FunFam" id="3.20.20.100:FF:000014">
    <property type="entry name" value="NAD(P)-linked oxidoreductase superfamily protein"/>
    <property type="match status" value="1"/>
</dbReference>
<dbReference type="Gene3D" id="3.20.20.100">
    <property type="entry name" value="NADP-dependent oxidoreductase domain"/>
    <property type="match status" value="1"/>
</dbReference>
<dbReference type="InterPro" id="IPR020471">
    <property type="entry name" value="AKR"/>
</dbReference>
<dbReference type="InterPro" id="IPR044497">
    <property type="entry name" value="AKR4A/B"/>
</dbReference>
<dbReference type="InterPro" id="IPR018170">
    <property type="entry name" value="Aldo/ket_reductase_CS"/>
</dbReference>
<dbReference type="InterPro" id="IPR023210">
    <property type="entry name" value="NADP_OxRdtase_dom"/>
</dbReference>
<dbReference type="InterPro" id="IPR036812">
    <property type="entry name" value="NADP_OxRdtase_dom_sf"/>
</dbReference>
<dbReference type="PANTHER" id="PTHR11732">
    <property type="entry name" value="ALDO/KETO REDUCTASE"/>
    <property type="match status" value="1"/>
</dbReference>
<dbReference type="Pfam" id="PF00248">
    <property type="entry name" value="Aldo_ket_red"/>
    <property type="match status" value="1"/>
</dbReference>
<dbReference type="PIRSF" id="PIRSF000097">
    <property type="entry name" value="AKR"/>
    <property type="match status" value="1"/>
</dbReference>
<dbReference type="PRINTS" id="PR00069">
    <property type="entry name" value="ALDKETRDTASE"/>
</dbReference>
<dbReference type="SUPFAM" id="SSF51430">
    <property type="entry name" value="NAD(P)-linked oxidoreductase"/>
    <property type="match status" value="1"/>
</dbReference>
<dbReference type="PROSITE" id="PS00798">
    <property type="entry name" value="ALDOKETO_REDUCTASE_1"/>
    <property type="match status" value="1"/>
</dbReference>
<dbReference type="PROSITE" id="PS00063">
    <property type="entry name" value="ALDOKETO_REDUCTASE_3"/>
    <property type="match status" value="1"/>
</dbReference>
<organism>
    <name type="scientific">Triticum aestivum</name>
    <name type="common">Wheat</name>
    <dbReference type="NCBI Taxonomy" id="4565"/>
    <lineage>
        <taxon>Eukaryota</taxon>
        <taxon>Viridiplantae</taxon>
        <taxon>Streptophyta</taxon>
        <taxon>Embryophyta</taxon>
        <taxon>Tracheophyta</taxon>
        <taxon>Spermatophyta</taxon>
        <taxon>Magnoliopsida</taxon>
        <taxon>Liliopsida</taxon>
        <taxon>Poales</taxon>
        <taxon>Poaceae</taxon>
        <taxon>BOP clade</taxon>
        <taxon>Pooideae</taxon>
        <taxon>Triticodae</taxon>
        <taxon>Triticeae</taxon>
        <taxon>Triticinae</taxon>
        <taxon>Triticum</taxon>
    </lineage>
</organism>
<accession>A0A1X9QHJ0</accession>
<feature type="chain" id="PRO_0000442304" description="Deoxymugineic acid synthase 1-D">
    <location>
        <begin position="1"/>
        <end position="314"/>
    </location>
</feature>
<feature type="region of interest" description="Disordered" evidence="4">
    <location>
        <begin position="1"/>
        <end position="21"/>
    </location>
</feature>
<feature type="active site" description="Proton donor" evidence="2">
    <location>
        <position position="49"/>
    </location>
</feature>
<feature type="binding site" evidence="1">
    <location>
        <position position="44"/>
    </location>
    <ligand>
        <name>NADP(+)</name>
        <dbReference type="ChEBI" id="CHEBI:58349"/>
    </ligand>
</feature>
<feature type="binding site" evidence="2">
    <location>
        <position position="112"/>
    </location>
    <ligand>
        <name>substrate</name>
    </ligand>
</feature>
<feature type="binding site" evidence="1">
    <location>
        <begin position="158"/>
        <end position="159"/>
    </location>
    <ligand>
        <name>NADP(+)</name>
        <dbReference type="ChEBI" id="CHEBI:58349"/>
    </ligand>
</feature>
<feature type="binding site" evidence="1">
    <location>
        <position position="180"/>
    </location>
    <ligand>
        <name>NADP(+)</name>
        <dbReference type="ChEBI" id="CHEBI:58349"/>
    </ligand>
</feature>
<feature type="binding site" evidence="1">
    <location>
        <begin position="258"/>
        <end position="266"/>
    </location>
    <ligand>
        <name>NADP(+)</name>
        <dbReference type="ChEBI" id="CHEBI:58349"/>
    </ligand>
</feature>
<feature type="binding site" evidence="2">
    <location>
        <begin position="273"/>
        <end position="281"/>
    </location>
    <ligand>
        <name>NADP(+)</name>
        <dbReference type="ChEBI" id="CHEBI:58349"/>
    </ligand>
</feature>
<proteinExistence type="evidence at transcript level"/>
<protein>
    <recommendedName>
        <fullName evidence="6">Deoxymugineic acid synthase 1-D</fullName>
        <ecNumber evidence="3">1.1.1.285</ecNumber>
    </recommendedName>
</protein>
<name>DMS1D_WHEAT</name>
<reference key="1">
    <citation type="journal article" date="2017" name="PLoS ONE">
        <title>Characterisation of the nicotianamine aminotransferase and deoxymugineic acid synthase genes essential to Strategy II iron uptake in bread wheat (Triticum aestivum L.).</title>
        <authorList>
            <person name="Beasley J.T."/>
            <person name="Bonneau J.P."/>
            <person name="Johnson A.A.T."/>
        </authorList>
    </citation>
    <scope>NUCLEOTIDE SEQUENCE [GENOMIC DNA]</scope>
    <scope>TISSUE SPECIFICITY</scope>
    <source>
        <strain>cv. Gladius</strain>
    </source>
</reference>
<keyword id="KW-0408">Iron</keyword>
<keyword id="KW-0521">NADP</keyword>
<keyword id="KW-0560">Oxidoreductase</keyword>
<keyword id="KW-1185">Reference proteome</keyword>